<organism>
    <name type="scientific">Thermus thermophilus (strain ATCC BAA-163 / DSM 7039 / HB27)</name>
    <dbReference type="NCBI Taxonomy" id="262724"/>
    <lineage>
        <taxon>Bacteria</taxon>
        <taxon>Thermotogati</taxon>
        <taxon>Deinococcota</taxon>
        <taxon>Deinococci</taxon>
        <taxon>Thermales</taxon>
        <taxon>Thermaceae</taxon>
        <taxon>Thermus</taxon>
    </lineage>
</organism>
<accession>Q746M5</accession>
<geneLocation type="plasmid">
    <name>pTT27</name>
</geneLocation>
<name>SURE2_THET2</name>
<reference key="1">
    <citation type="journal article" date="2004" name="Nat. Biotechnol.">
        <title>The genome sequence of the extreme thermophile Thermus thermophilus.</title>
        <authorList>
            <person name="Henne A."/>
            <person name="Brueggemann H."/>
            <person name="Raasch C."/>
            <person name="Wiezer A."/>
            <person name="Hartsch T."/>
            <person name="Liesegang H."/>
            <person name="Johann A."/>
            <person name="Lienard T."/>
            <person name="Gohl O."/>
            <person name="Martinez-Arias R."/>
            <person name="Jacobi C."/>
            <person name="Starkuviene V."/>
            <person name="Schlenczeck S."/>
            <person name="Dencker S."/>
            <person name="Huber R."/>
            <person name="Klenk H.-P."/>
            <person name="Kramer W."/>
            <person name="Merkl R."/>
            <person name="Gottschalk G."/>
            <person name="Fritz H.-J."/>
        </authorList>
    </citation>
    <scope>NUCLEOTIDE SEQUENCE [LARGE SCALE GENOMIC DNA]</scope>
    <source>
        <strain>ATCC BAA-163 / DSM 7039 / HB27</strain>
    </source>
</reference>
<feature type="chain" id="PRO_0000235661" description="5'-nucleotidase SurE 2">
    <location>
        <begin position="1"/>
        <end position="244"/>
    </location>
</feature>
<feature type="binding site" evidence="1">
    <location>
        <position position="8"/>
    </location>
    <ligand>
        <name>a divalent metal cation</name>
        <dbReference type="ChEBI" id="CHEBI:60240"/>
    </ligand>
</feature>
<feature type="binding site" evidence="1">
    <location>
        <position position="9"/>
    </location>
    <ligand>
        <name>a divalent metal cation</name>
        <dbReference type="ChEBI" id="CHEBI:60240"/>
    </ligand>
</feature>
<feature type="binding site" evidence="1">
    <location>
        <position position="39"/>
    </location>
    <ligand>
        <name>a divalent metal cation</name>
        <dbReference type="ChEBI" id="CHEBI:60240"/>
    </ligand>
</feature>
<feature type="binding site" evidence="1">
    <location>
        <position position="96"/>
    </location>
    <ligand>
        <name>a divalent metal cation</name>
        <dbReference type="ChEBI" id="CHEBI:60240"/>
    </ligand>
</feature>
<keyword id="KW-0963">Cytoplasm</keyword>
<keyword id="KW-0378">Hydrolase</keyword>
<keyword id="KW-0479">Metal-binding</keyword>
<keyword id="KW-0547">Nucleotide-binding</keyword>
<keyword id="KW-0614">Plasmid</keyword>
<protein>
    <recommendedName>
        <fullName evidence="1">5'-nucleotidase SurE 2</fullName>
        <ecNumber evidence="1">3.1.3.5</ecNumber>
    </recommendedName>
    <alternativeName>
        <fullName evidence="1">Nucleoside 5'-monophosphate phosphohydrolase 2</fullName>
    </alternativeName>
</protein>
<dbReference type="EC" id="3.1.3.5" evidence="1"/>
<dbReference type="EMBL" id="AE017222">
    <property type="protein sequence ID" value="AAS82358.1"/>
    <property type="molecule type" value="Genomic_DNA"/>
</dbReference>
<dbReference type="RefSeq" id="WP_011174531.1">
    <property type="nucleotide sequence ID" value="NC_005838.1"/>
</dbReference>
<dbReference type="SMR" id="Q746M5"/>
<dbReference type="KEGG" id="tth:TT_P0028"/>
<dbReference type="eggNOG" id="COG0496">
    <property type="taxonomic scope" value="Bacteria"/>
</dbReference>
<dbReference type="HOGENOM" id="CLU_045192_1_3_0"/>
<dbReference type="OrthoDB" id="9780815at2"/>
<dbReference type="Proteomes" id="UP000000592">
    <property type="component" value="Plasmid pTT27"/>
</dbReference>
<dbReference type="GO" id="GO:0005737">
    <property type="term" value="C:cytoplasm"/>
    <property type="evidence" value="ECO:0007669"/>
    <property type="project" value="UniProtKB-SubCell"/>
</dbReference>
<dbReference type="GO" id="GO:0008254">
    <property type="term" value="F:3'-nucleotidase activity"/>
    <property type="evidence" value="ECO:0007669"/>
    <property type="project" value="TreeGrafter"/>
</dbReference>
<dbReference type="GO" id="GO:0008253">
    <property type="term" value="F:5'-nucleotidase activity"/>
    <property type="evidence" value="ECO:0007669"/>
    <property type="project" value="UniProtKB-UniRule"/>
</dbReference>
<dbReference type="GO" id="GO:0004309">
    <property type="term" value="F:exopolyphosphatase activity"/>
    <property type="evidence" value="ECO:0007669"/>
    <property type="project" value="TreeGrafter"/>
</dbReference>
<dbReference type="GO" id="GO:0046872">
    <property type="term" value="F:metal ion binding"/>
    <property type="evidence" value="ECO:0007669"/>
    <property type="project" value="UniProtKB-UniRule"/>
</dbReference>
<dbReference type="GO" id="GO:0000166">
    <property type="term" value="F:nucleotide binding"/>
    <property type="evidence" value="ECO:0007669"/>
    <property type="project" value="UniProtKB-KW"/>
</dbReference>
<dbReference type="Gene3D" id="3.40.1210.10">
    <property type="entry name" value="Survival protein SurE-like phosphatase/nucleotidase"/>
    <property type="match status" value="1"/>
</dbReference>
<dbReference type="HAMAP" id="MF_00060">
    <property type="entry name" value="SurE"/>
    <property type="match status" value="1"/>
</dbReference>
<dbReference type="InterPro" id="IPR030048">
    <property type="entry name" value="SurE"/>
</dbReference>
<dbReference type="InterPro" id="IPR002828">
    <property type="entry name" value="SurE-like_Pase/nucleotidase"/>
</dbReference>
<dbReference type="InterPro" id="IPR036523">
    <property type="entry name" value="SurE-like_sf"/>
</dbReference>
<dbReference type="NCBIfam" id="TIGR00087">
    <property type="entry name" value="surE"/>
    <property type="match status" value="1"/>
</dbReference>
<dbReference type="PANTHER" id="PTHR30457">
    <property type="entry name" value="5'-NUCLEOTIDASE SURE"/>
    <property type="match status" value="1"/>
</dbReference>
<dbReference type="PANTHER" id="PTHR30457:SF12">
    <property type="entry name" value="5'_3'-NUCLEOTIDASE SURE"/>
    <property type="match status" value="1"/>
</dbReference>
<dbReference type="Pfam" id="PF01975">
    <property type="entry name" value="SurE"/>
    <property type="match status" value="1"/>
</dbReference>
<dbReference type="SUPFAM" id="SSF64167">
    <property type="entry name" value="SurE-like"/>
    <property type="match status" value="1"/>
</dbReference>
<comment type="function">
    <text evidence="1">Nucleotidase that shows phosphatase activity on nucleoside 5'-monophosphates.</text>
</comment>
<comment type="catalytic activity">
    <reaction evidence="1">
        <text>a ribonucleoside 5'-phosphate + H2O = a ribonucleoside + phosphate</text>
        <dbReference type="Rhea" id="RHEA:12484"/>
        <dbReference type="ChEBI" id="CHEBI:15377"/>
        <dbReference type="ChEBI" id="CHEBI:18254"/>
        <dbReference type="ChEBI" id="CHEBI:43474"/>
        <dbReference type="ChEBI" id="CHEBI:58043"/>
        <dbReference type="EC" id="3.1.3.5"/>
    </reaction>
</comment>
<comment type="cofactor">
    <cofactor evidence="1">
        <name>a divalent metal cation</name>
        <dbReference type="ChEBI" id="CHEBI:60240"/>
    </cofactor>
    <text evidence="1">Binds 1 divalent metal cation per subunit.</text>
</comment>
<comment type="subcellular location">
    <subcellularLocation>
        <location evidence="1">Cytoplasm</location>
    </subcellularLocation>
</comment>
<comment type="similarity">
    <text evidence="1">Belongs to the SurE nucleotidase family.</text>
</comment>
<evidence type="ECO:0000255" key="1">
    <source>
        <dbReference type="HAMAP-Rule" id="MF_00060"/>
    </source>
</evidence>
<gene>
    <name evidence="1" type="primary">surE2</name>
    <name type="ordered locus">TT_P0028</name>
</gene>
<proteinExistence type="inferred from homology"/>
<sequence>MRILVTNDDGIYSPGLWALAEAASQFGEVFVAAPDTEQSATGHAITIAHPVRAYPHPAPLHGPHFPAYQVRGTPADCVALGLHLFGPVDLVLSGVNLGSNLGHEIWHSGTVAAAKQGYLFGLSAAAFSVPLNGEVPDFAGLRPWLLRTLETLLRLERPFLVNVNLPLRPKGFLWTRQSVRAYEGVVIPGEDPMGRPFYWFASRPLKEAEEGTDRWAVAQGFVSATPLRLDLTDETRLQPALAQE</sequence>